<reference key="1">
    <citation type="journal article" date="1986" name="Nucleic Acids Res.">
        <title>The genes encoding the small subunit of ribulose-1,5-bisphosphate carboxylase are expressed differentially in petunia leaves.</title>
        <authorList>
            <person name="Tumer N.E."/>
            <person name="Clark W.G."/>
            <person name="Tabor G.J."/>
            <person name="Hironaka C.M."/>
            <person name="Fraley R.T."/>
            <person name="Shah D.M."/>
        </authorList>
    </citation>
    <scope>NUCLEOTIDE SEQUENCE [GENOMIC DNA]</scope>
    <source>
        <strain>cv. Mitchell</strain>
    </source>
</reference>
<sequence>MASSVMSSAAVATSTNAAQASMVAPFTGLKSAASFPVSRKQNLDITSIASNGGRVQCMQVWPPYGKKKYETLSYLPDLTDEQLLKEIEYLLNKGWVPCLEFETEHGFVYREYHASPRYYDGRYWTMWKLPMFGCTDATQVLGELQEAKKAYPNAWIRIIGFDNVRQVQCISFIAYKPPGY</sequence>
<gene>
    <name evidence="1" type="primary">RBCS2</name>
    <name type="synonym">RBCS</name>
</gene>
<comment type="function">
    <text evidence="1">RuBisCO catalyzes two reactions: the carboxylation of D-ribulose 1,5-bisphosphate, the primary event in carbon dioxide fixation, as well as the oxidative fragmentation of the pentose substrate. Both reactions occur simultaneously and in competition at the same active site. Although the small subunit is not catalytic it is essential for maximal activity.</text>
</comment>
<comment type="subunit">
    <text evidence="1">Heterohexadecamer of 8 large and 8 small subunits.</text>
</comment>
<comment type="subcellular location">
    <subcellularLocation>
        <location evidence="1">Plastid</location>
        <location evidence="1">Chloroplast</location>
    </subcellularLocation>
</comment>
<comment type="miscellaneous">
    <text evidence="1">The basic functional RuBisCO is composed of a large chain homodimer in a 'head-to-tail' conformation. In form I RuBisCO this homodimer is arranged in a barrel-like tetramer with the small subunits forming a tetrameric 'cap' on each end of the 'barrel'.</text>
</comment>
<comment type="similarity">
    <text evidence="1">Belongs to the RuBisCO small chain family.</text>
</comment>
<accession>P04715</accession>
<dbReference type="EMBL" id="X03821">
    <property type="protein sequence ID" value="CAA27445.1"/>
    <property type="molecule type" value="Genomic_DNA"/>
</dbReference>
<dbReference type="SMR" id="P04715"/>
<dbReference type="GO" id="GO:0009507">
    <property type="term" value="C:chloroplast"/>
    <property type="evidence" value="ECO:0007669"/>
    <property type="project" value="UniProtKB-SubCell"/>
</dbReference>
<dbReference type="GO" id="GO:0016984">
    <property type="term" value="F:ribulose-bisphosphate carboxylase activity"/>
    <property type="evidence" value="ECO:0007669"/>
    <property type="project" value="UniProtKB-UniRule"/>
</dbReference>
<dbReference type="GO" id="GO:0009853">
    <property type="term" value="P:photorespiration"/>
    <property type="evidence" value="ECO:0007669"/>
    <property type="project" value="UniProtKB-KW"/>
</dbReference>
<dbReference type="GO" id="GO:0019253">
    <property type="term" value="P:reductive pentose-phosphate cycle"/>
    <property type="evidence" value="ECO:0007669"/>
    <property type="project" value="UniProtKB-UniRule"/>
</dbReference>
<dbReference type="CDD" id="cd03527">
    <property type="entry name" value="RuBisCO_small"/>
    <property type="match status" value="1"/>
</dbReference>
<dbReference type="FunFam" id="3.30.190.10:FF:000001">
    <property type="entry name" value="Ribulose bisphosphate carboxylase small chain, chloroplastic"/>
    <property type="match status" value="1"/>
</dbReference>
<dbReference type="Gene3D" id="3.30.190.10">
    <property type="entry name" value="Ribulose bisphosphate carboxylase, small subunit"/>
    <property type="match status" value="1"/>
</dbReference>
<dbReference type="HAMAP" id="MF_00859">
    <property type="entry name" value="RuBisCO_S_bact"/>
    <property type="match status" value="1"/>
</dbReference>
<dbReference type="InterPro" id="IPR024681">
    <property type="entry name" value="RuBisCO_ssu"/>
</dbReference>
<dbReference type="InterPro" id="IPR000894">
    <property type="entry name" value="RuBisCO_ssu_dom"/>
</dbReference>
<dbReference type="InterPro" id="IPR024680">
    <property type="entry name" value="RuBisCO_ssu_N"/>
</dbReference>
<dbReference type="InterPro" id="IPR036385">
    <property type="entry name" value="RuBisCO_ssu_sf"/>
</dbReference>
<dbReference type="PANTHER" id="PTHR31262">
    <property type="entry name" value="RIBULOSE BISPHOSPHATE CARBOXYLASE SMALL CHAIN 1, CHLOROPLASTIC"/>
    <property type="match status" value="1"/>
</dbReference>
<dbReference type="PANTHER" id="PTHR31262:SF10">
    <property type="entry name" value="RIBULOSE BISPHOSPHATE CARBOXYLASE SMALL SUBUNIT 1A, CHLOROPLASTIC-RELATED"/>
    <property type="match status" value="1"/>
</dbReference>
<dbReference type="Pfam" id="PF12338">
    <property type="entry name" value="RbcS"/>
    <property type="match status" value="1"/>
</dbReference>
<dbReference type="Pfam" id="PF00101">
    <property type="entry name" value="RuBisCO_small"/>
    <property type="match status" value="1"/>
</dbReference>
<dbReference type="PRINTS" id="PR00152">
    <property type="entry name" value="RUBISCOSMALL"/>
</dbReference>
<dbReference type="SMART" id="SM00961">
    <property type="entry name" value="RuBisCO_small"/>
    <property type="match status" value="1"/>
</dbReference>
<dbReference type="SUPFAM" id="SSF55239">
    <property type="entry name" value="RuBisCO, small subunit"/>
    <property type="match status" value="1"/>
</dbReference>
<proteinExistence type="inferred from homology"/>
<organism>
    <name type="scientific">Petunia hybrida</name>
    <name type="common">Petunia</name>
    <dbReference type="NCBI Taxonomy" id="4102"/>
    <lineage>
        <taxon>Eukaryota</taxon>
        <taxon>Viridiplantae</taxon>
        <taxon>Streptophyta</taxon>
        <taxon>Embryophyta</taxon>
        <taxon>Tracheophyta</taxon>
        <taxon>Spermatophyta</taxon>
        <taxon>Magnoliopsida</taxon>
        <taxon>eudicotyledons</taxon>
        <taxon>Gunneridae</taxon>
        <taxon>Pentapetalae</taxon>
        <taxon>asterids</taxon>
        <taxon>lamiids</taxon>
        <taxon>Solanales</taxon>
        <taxon>Solanaceae</taxon>
        <taxon>Petunioideae</taxon>
        <taxon>Petunia</taxon>
    </lineage>
</organism>
<name>RBS2_PETHY</name>
<keyword id="KW-0113">Calvin cycle</keyword>
<keyword id="KW-0120">Carbon dioxide fixation</keyword>
<keyword id="KW-0150">Chloroplast</keyword>
<keyword id="KW-0601">Photorespiration</keyword>
<keyword id="KW-0602">Photosynthesis</keyword>
<keyword id="KW-0934">Plastid</keyword>
<keyword id="KW-0809">Transit peptide</keyword>
<evidence type="ECO:0000255" key="1">
    <source>
        <dbReference type="HAMAP-Rule" id="MF_00860"/>
    </source>
</evidence>
<feature type="transit peptide" description="Chloroplast" evidence="1">
    <location>
        <begin position="1"/>
        <end position="56"/>
    </location>
</feature>
<feature type="chain" id="PRO_0000031544" description="Ribulose bisphosphate carboxylase small subunit, chloroplastic 2" evidence="1">
    <location>
        <begin position="57"/>
        <end position="180"/>
    </location>
</feature>
<protein>
    <recommendedName>
        <fullName evidence="1">Ribulose bisphosphate carboxylase small subunit, chloroplastic 2</fullName>
        <shortName evidence="1">RuBisCO small subunit 2</shortName>
    </recommendedName>
    <alternativeName>
        <fullName>Ribulose bisphosphate carboxylase small chain SSU11A, chloroplastic</fullName>
        <shortName>RuBisCO small subunit SSU11A</shortName>
    </alternativeName>
</protein>